<feature type="chain" id="PRO_1000123793" description="Arginine repressor">
    <location>
        <begin position="1"/>
        <end position="150"/>
    </location>
</feature>
<comment type="function">
    <text evidence="1">Regulates arginine biosynthesis genes.</text>
</comment>
<comment type="pathway">
    <text>Amino-acid biosynthesis; L-arginine biosynthesis [regulation].</text>
</comment>
<comment type="subcellular location">
    <subcellularLocation>
        <location evidence="1">Cytoplasm</location>
    </subcellularLocation>
</comment>
<comment type="similarity">
    <text evidence="1">Belongs to the ArgR family.</text>
</comment>
<protein>
    <recommendedName>
        <fullName evidence="1">Arginine repressor</fullName>
    </recommendedName>
</protein>
<name>ARGR_DESHD</name>
<sequence length="150" mass="16712">MKTRRQMKIQEIINNQVIHTQEELAELLRKAGFDVTQATVSRDIKEMGLIKVPTSEDDYRYAVPGTAQPLSTPDRLKRRLRETVVTVNDSENLVVLRTIPGNAQALASLIDHSNWEEVIGTVAGDDTILLVVKPAGAVPSVRERIAKLMQ</sequence>
<reference key="1">
    <citation type="journal article" date="2012" name="BMC Microbiol.">
        <title>Genome sequence of Desulfitobacterium hafniense DCB-2, a Gram-positive anaerobe capable of dehalogenation and metal reduction.</title>
        <authorList>
            <person name="Kim S.H."/>
            <person name="Harzman C."/>
            <person name="Davis J.K."/>
            <person name="Hutcheson R."/>
            <person name="Broderick J.B."/>
            <person name="Marsh T.L."/>
            <person name="Tiedje J.M."/>
        </authorList>
    </citation>
    <scope>NUCLEOTIDE SEQUENCE [LARGE SCALE GENOMIC DNA]</scope>
    <source>
        <strain>DSM 10664 / DCB-2</strain>
    </source>
</reference>
<evidence type="ECO:0000255" key="1">
    <source>
        <dbReference type="HAMAP-Rule" id="MF_00173"/>
    </source>
</evidence>
<keyword id="KW-0028">Amino-acid biosynthesis</keyword>
<keyword id="KW-0055">Arginine biosynthesis</keyword>
<keyword id="KW-0963">Cytoplasm</keyword>
<keyword id="KW-0238">DNA-binding</keyword>
<keyword id="KW-0678">Repressor</keyword>
<keyword id="KW-0804">Transcription</keyword>
<keyword id="KW-0805">Transcription regulation</keyword>
<accession>B8FQ41</accession>
<proteinExistence type="inferred from homology"/>
<organism>
    <name type="scientific">Desulfitobacterium hafniense (strain DSM 10664 / DCB-2)</name>
    <dbReference type="NCBI Taxonomy" id="272564"/>
    <lineage>
        <taxon>Bacteria</taxon>
        <taxon>Bacillati</taxon>
        <taxon>Bacillota</taxon>
        <taxon>Clostridia</taxon>
        <taxon>Eubacteriales</taxon>
        <taxon>Desulfitobacteriaceae</taxon>
        <taxon>Desulfitobacterium</taxon>
    </lineage>
</organism>
<dbReference type="EMBL" id="CP001336">
    <property type="protein sequence ID" value="ACL21502.1"/>
    <property type="molecule type" value="Genomic_DNA"/>
</dbReference>
<dbReference type="RefSeq" id="WP_005810957.1">
    <property type="nucleotide sequence ID" value="NC_011830.1"/>
</dbReference>
<dbReference type="SMR" id="B8FQ41"/>
<dbReference type="KEGG" id="dhd:Dhaf_3484"/>
<dbReference type="HOGENOM" id="CLU_097103_3_0_9"/>
<dbReference type="UniPathway" id="UPA00068"/>
<dbReference type="Proteomes" id="UP000007726">
    <property type="component" value="Chromosome"/>
</dbReference>
<dbReference type="GO" id="GO:0005737">
    <property type="term" value="C:cytoplasm"/>
    <property type="evidence" value="ECO:0007669"/>
    <property type="project" value="UniProtKB-SubCell"/>
</dbReference>
<dbReference type="GO" id="GO:0034618">
    <property type="term" value="F:arginine binding"/>
    <property type="evidence" value="ECO:0007669"/>
    <property type="project" value="InterPro"/>
</dbReference>
<dbReference type="GO" id="GO:0003677">
    <property type="term" value="F:DNA binding"/>
    <property type="evidence" value="ECO:0007669"/>
    <property type="project" value="UniProtKB-KW"/>
</dbReference>
<dbReference type="GO" id="GO:0003700">
    <property type="term" value="F:DNA-binding transcription factor activity"/>
    <property type="evidence" value="ECO:0007669"/>
    <property type="project" value="UniProtKB-UniRule"/>
</dbReference>
<dbReference type="GO" id="GO:0006526">
    <property type="term" value="P:L-arginine biosynthetic process"/>
    <property type="evidence" value="ECO:0007669"/>
    <property type="project" value="UniProtKB-UniPathway"/>
</dbReference>
<dbReference type="GO" id="GO:0051259">
    <property type="term" value="P:protein complex oligomerization"/>
    <property type="evidence" value="ECO:0007669"/>
    <property type="project" value="InterPro"/>
</dbReference>
<dbReference type="GO" id="GO:1900079">
    <property type="term" value="P:regulation of arginine biosynthetic process"/>
    <property type="evidence" value="ECO:0007669"/>
    <property type="project" value="UniProtKB-UniRule"/>
</dbReference>
<dbReference type="Gene3D" id="3.30.1360.40">
    <property type="match status" value="1"/>
</dbReference>
<dbReference type="Gene3D" id="1.10.10.10">
    <property type="entry name" value="Winged helix-like DNA-binding domain superfamily/Winged helix DNA-binding domain"/>
    <property type="match status" value="1"/>
</dbReference>
<dbReference type="HAMAP" id="MF_00173">
    <property type="entry name" value="Arg_repressor"/>
    <property type="match status" value="1"/>
</dbReference>
<dbReference type="InterPro" id="IPR001669">
    <property type="entry name" value="Arg_repress"/>
</dbReference>
<dbReference type="InterPro" id="IPR020899">
    <property type="entry name" value="Arg_repress_C"/>
</dbReference>
<dbReference type="InterPro" id="IPR036251">
    <property type="entry name" value="Arg_repress_C_sf"/>
</dbReference>
<dbReference type="InterPro" id="IPR020900">
    <property type="entry name" value="Arg_repress_DNA-bd"/>
</dbReference>
<dbReference type="InterPro" id="IPR036388">
    <property type="entry name" value="WH-like_DNA-bd_sf"/>
</dbReference>
<dbReference type="InterPro" id="IPR036390">
    <property type="entry name" value="WH_DNA-bd_sf"/>
</dbReference>
<dbReference type="NCBIfam" id="TIGR01529">
    <property type="entry name" value="argR_whole"/>
    <property type="match status" value="1"/>
</dbReference>
<dbReference type="PANTHER" id="PTHR34471">
    <property type="entry name" value="ARGININE REPRESSOR"/>
    <property type="match status" value="1"/>
</dbReference>
<dbReference type="PANTHER" id="PTHR34471:SF1">
    <property type="entry name" value="ARGININE REPRESSOR"/>
    <property type="match status" value="1"/>
</dbReference>
<dbReference type="Pfam" id="PF01316">
    <property type="entry name" value="Arg_repressor"/>
    <property type="match status" value="1"/>
</dbReference>
<dbReference type="Pfam" id="PF02863">
    <property type="entry name" value="Arg_repressor_C"/>
    <property type="match status" value="1"/>
</dbReference>
<dbReference type="PRINTS" id="PR01467">
    <property type="entry name" value="ARGREPRESSOR"/>
</dbReference>
<dbReference type="SUPFAM" id="SSF55252">
    <property type="entry name" value="C-terminal domain of arginine repressor"/>
    <property type="match status" value="1"/>
</dbReference>
<dbReference type="SUPFAM" id="SSF46785">
    <property type="entry name" value="Winged helix' DNA-binding domain"/>
    <property type="match status" value="1"/>
</dbReference>
<gene>
    <name evidence="1" type="primary">argR</name>
    <name type="ordered locus">Dhaf_3484</name>
</gene>